<keyword id="KW-0001">2Fe-2S</keyword>
<keyword id="KW-0004">4Fe-4S</keyword>
<keyword id="KW-0093">Biotin biosynthesis</keyword>
<keyword id="KW-0408">Iron</keyword>
<keyword id="KW-0411">Iron-sulfur</keyword>
<keyword id="KW-0479">Metal-binding</keyword>
<keyword id="KW-0949">S-adenosyl-L-methionine</keyword>
<keyword id="KW-0808">Transferase</keyword>
<organism>
    <name type="scientific">Salmonella typhi</name>
    <dbReference type="NCBI Taxonomy" id="90370"/>
    <lineage>
        <taxon>Bacteria</taxon>
        <taxon>Pseudomonadati</taxon>
        <taxon>Pseudomonadota</taxon>
        <taxon>Gammaproteobacteria</taxon>
        <taxon>Enterobacterales</taxon>
        <taxon>Enterobacteriaceae</taxon>
        <taxon>Salmonella</taxon>
    </lineage>
</organism>
<protein>
    <recommendedName>
        <fullName evidence="1">Biotin synthase</fullName>
        <ecNumber evidence="1">2.8.1.6</ecNumber>
    </recommendedName>
</protein>
<feature type="chain" id="PRO_0000381609" description="Biotin synthase">
    <location>
        <begin position="1"/>
        <end position="346"/>
    </location>
</feature>
<feature type="domain" description="Radical SAM core" evidence="2">
    <location>
        <begin position="38"/>
        <end position="256"/>
    </location>
</feature>
<feature type="binding site" evidence="1">
    <location>
        <position position="53"/>
    </location>
    <ligand>
        <name>[4Fe-4S] cluster</name>
        <dbReference type="ChEBI" id="CHEBI:49883"/>
        <note>4Fe-4S-S-AdoMet</note>
    </ligand>
</feature>
<feature type="binding site" evidence="1">
    <location>
        <position position="57"/>
    </location>
    <ligand>
        <name>[4Fe-4S] cluster</name>
        <dbReference type="ChEBI" id="CHEBI:49883"/>
        <note>4Fe-4S-S-AdoMet</note>
    </ligand>
</feature>
<feature type="binding site" evidence="1">
    <location>
        <position position="60"/>
    </location>
    <ligand>
        <name>[4Fe-4S] cluster</name>
        <dbReference type="ChEBI" id="CHEBI:49883"/>
        <note>4Fe-4S-S-AdoMet</note>
    </ligand>
</feature>
<feature type="binding site" evidence="1">
    <location>
        <position position="97"/>
    </location>
    <ligand>
        <name>[2Fe-2S] cluster</name>
        <dbReference type="ChEBI" id="CHEBI:190135"/>
    </ligand>
</feature>
<feature type="binding site" evidence="1">
    <location>
        <position position="128"/>
    </location>
    <ligand>
        <name>[2Fe-2S] cluster</name>
        <dbReference type="ChEBI" id="CHEBI:190135"/>
    </ligand>
</feature>
<feature type="binding site" evidence="1">
    <location>
        <position position="188"/>
    </location>
    <ligand>
        <name>[2Fe-2S] cluster</name>
        <dbReference type="ChEBI" id="CHEBI:190135"/>
    </ligand>
</feature>
<feature type="binding site" evidence="1">
    <location>
        <position position="260"/>
    </location>
    <ligand>
        <name>[2Fe-2S] cluster</name>
        <dbReference type="ChEBI" id="CHEBI:190135"/>
    </ligand>
</feature>
<reference key="1">
    <citation type="journal article" date="2001" name="Nature">
        <title>Complete genome sequence of a multiple drug resistant Salmonella enterica serovar Typhi CT18.</title>
        <authorList>
            <person name="Parkhill J."/>
            <person name="Dougan G."/>
            <person name="James K.D."/>
            <person name="Thomson N.R."/>
            <person name="Pickard D."/>
            <person name="Wain J."/>
            <person name="Churcher C.M."/>
            <person name="Mungall K.L."/>
            <person name="Bentley S.D."/>
            <person name="Holden M.T.G."/>
            <person name="Sebaihia M."/>
            <person name="Baker S."/>
            <person name="Basham D."/>
            <person name="Brooks K."/>
            <person name="Chillingworth T."/>
            <person name="Connerton P."/>
            <person name="Cronin A."/>
            <person name="Davis P."/>
            <person name="Davies R.M."/>
            <person name="Dowd L."/>
            <person name="White N."/>
            <person name="Farrar J."/>
            <person name="Feltwell T."/>
            <person name="Hamlin N."/>
            <person name="Haque A."/>
            <person name="Hien T.T."/>
            <person name="Holroyd S."/>
            <person name="Jagels K."/>
            <person name="Krogh A."/>
            <person name="Larsen T.S."/>
            <person name="Leather S."/>
            <person name="Moule S."/>
            <person name="O'Gaora P."/>
            <person name="Parry C."/>
            <person name="Quail M.A."/>
            <person name="Rutherford K.M."/>
            <person name="Simmonds M."/>
            <person name="Skelton J."/>
            <person name="Stevens K."/>
            <person name="Whitehead S."/>
            <person name="Barrell B.G."/>
        </authorList>
    </citation>
    <scope>NUCLEOTIDE SEQUENCE [LARGE SCALE GENOMIC DNA]</scope>
    <source>
        <strain>CT18</strain>
    </source>
</reference>
<reference key="2">
    <citation type="journal article" date="2003" name="J. Bacteriol.">
        <title>Comparative genomics of Salmonella enterica serovar Typhi strains Ty2 and CT18.</title>
        <authorList>
            <person name="Deng W."/>
            <person name="Liou S.-R."/>
            <person name="Plunkett G. III"/>
            <person name="Mayhew G.F."/>
            <person name="Rose D.J."/>
            <person name="Burland V."/>
            <person name="Kodoyianni V."/>
            <person name="Schwartz D.C."/>
            <person name="Blattner F.R."/>
        </authorList>
    </citation>
    <scope>NUCLEOTIDE SEQUENCE [LARGE SCALE GENOMIC DNA]</scope>
    <source>
        <strain>ATCC 700931 / Ty2</strain>
    </source>
</reference>
<gene>
    <name evidence="1" type="primary">bioB</name>
    <name type="ordered locus">STY0827</name>
    <name type="ordered locus">t2093</name>
</gene>
<sequence>MARHPRWTLSQVTELFEKPLLELLFEAQQIHRQHFDPQQVQVSTLLSIKTGACPEDCKYCPQSSRYKTGLEAERLMEVEQVLDSARKAKNAGSTRFCMGAAWKNPHERDMPYLEKIVQGVKAMGLETCMTLGMLNESQAQRLANAGLDYYNHNLDTSPEFYGNIITTRTYQERLDTLEKVREAGIKVCSGGIVGLGETVTDRAGLLLQLANLPTPPESVPINMLVKVKGTPLADNDDVDAFDFIRTIAVARIMMPTSYVRLSAGREQMNEQTQAMCFMAGANSIFYGCKLLTTPNPAEDKDLQLFRKLGLNPQQTRVLAGDNEQQQRLEQTLMTPDTDDYYNAAAL</sequence>
<proteinExistence type="inferred from homology"/>
<evidence type="ECO:0000255" key="1">
    <source>
        <dbReference type="HAMAP-Rule" id="MF_01694"/>
    </source>
</evidence>
<evidence type="ECO:0000255" key="2">
    <source>
        <dbReference type="PROSITE-ProRule" id="PRU01266"/>
    </source>
</evidence>
<name>BIOB_SALTI</name>
<comment type="function">
    <text evidence="1">Catalyzes the conversion of dethiobiotin (DTB) to biotin by the insertion of a sulfur atom into dethiobiotin via a radical-based mechanism.</text>
</comment>
<comment type="catalytic activity">
    <reaction evidence="1">
        <text>(4R,5S)-dethiobiotin + (sulfur carrier)-SH + 2 reduced [2Fe-2S]-[ferredoxin] + 2 S-adenosyl-L-methionine = (sulfur carrier)-H + biotin + 2 5'-deoxyadenosine + 2 L-methionine + 2 oxidized [2Fe-2S]-[ferredoxin]</text>
        <dbReference type="Rhea" id="RHEA:22060"/>
        <dbReference type="Rhea" id="RHEA-COMP:10000"/>
        <dbReference type="Rhea" id="RHEA-COMP:10001"/>
        <dbReference type="Rhea" id="RHEA-COMP:14737"/>
        <dbReference type="Rhea" id="RHEA-COMP:14739"/>
        <dbReference type="ChEBI" id="CHEBI:17319"/>
        <dbReference type="ChEBI" id="CHEBI:29917"/>
        <dbReference type="ChEBI" id="CHEBI:33737"/>
        <dbReference type="ChEBI" id="CHEBI:33738"/>
        <dbReference type="ChEBI" id="CHEBI:57586"/>
        <dbReference type="ChEBI" id="CHEBI:57844"/>
        <dbReference type="ChEBI" id="CHEBI:59789"/>
        <dbReference type="ChEBI" id="CHEBI:64428"/>
        <dbReference type="ChEBI" id="CHEBI:149473"/>
        <dbReference type="EC" id="2.8.1.6"/>
    </reaction>
</comment>
<comment type="cofactor">
    <cofactor evidence="1">
        <name>[4Fe-4S] cluster</name>
        <dbReference type="ChEBI" id="CHEBI:49883"/>
    </cofactor>
    <text evidence="1">Binds 1 [4Fe-4S] cluster. The cluster is coordinated with 3 cysteines and an exchangeable S-adenosyl-L-methionine.</text>
</comment>
<comment type="cofactor">
    <cofactor evidence="1">
        <name>[2Fe-2S] cluster</name>
        <dbReference type="ChEBI" id="CHEBI:190135"/>
    </cofactor>
    <text evidence="1">Binds 1 [2Fe-2S] cluster. The cluster is coordinated with 3 cysteines and 1 arginine.</text>
</comment>
<comment type="pathway">
    <text evidence="1">Cofactor biosynthesis; biotin biosynthesis; biotin from 7,8-diaminononanoate: step 2/2.</text>
</comment>
<comment type="subunit">
    <text evidence="1">Homodimer.</text>
</comment>
<comment type="similarity">
    <text evidence="1">Belongs to the radical SAM superfamily. Biotin synthase family.</text>
</comment>
<accession>Q8Z893</accession>
<accession>Q7C8R1</accession>
<dbReference type="EC" id="2.8.1.6" evidence="1"/>
<dbReference type="EMBL" id="AE014613">
    <property type="protein sequence ID" value="AAO69710.1"/>
    <property type="molecule type" value="Genomic_DNA"/>
</dbReference>
<dbReference type="EMBL" id="AL513382">
    <property type="protein sequence ID" value="CAD05242.1"/>
    <property type="molecule type" value="Genomic_DNA"/>
</dbReference>
<dbReference type="RefSeq" id="NP_455336.1">
    <property type="nucleotide sequence ID" value="NC_003198.1"/>
</dbReference>
<dbReference type="RefSeq" id="WP_000090724.1">
    <property type="nucleotide sequence ID" value="NZ_WSUR01000021.1"/>
</dbReference>
<dbReference type="SMR" id="Q8Z893"/>
<dbReference type="STRING" id="220341.gene:17584832"/>
<dbReference type="KEGG" id="stt:t2093"/>
<dbReference type="KEGG" id="sty:STY0827"/>
<dbReference type="PATRIC" id="fig|220341.7.peg.831"/>
<dbReference type="eggNOG" id="COG0502">
    <property type="taxonomic scope" value="Bacteria"/>
</dbReference>
<dbReference type="HOGENOM" id="CLU_033172_1_2_6"/>
<dbReference type="OMA" id="NICTTHT"/>
<dbReference type="OrthoDB" id="9786826at2"/>
<dbReference type="UniPathway" id="UPA00078">
    <property type="reaction ID" value="UER00162"/>
</dbReference>
<dbReference type="Proteomes" id="UP000000541">
    <property type="component" value="Chromosome"/>
</dbReference>
<dbReference type="Proteomes" id="UP000002670">
    <property type="component" value="Chromosome"/>
</dbReference>
<dbReference type="GO" id="GO:0051537">
    <property type="term" value="F:2 iron, 2 sulfur cluster binding"/>
    <property type="evidence" value="ECO:0007669"/>
    <property type="project" value="UniProtKB-KW"/>
</dbReference>
<dbReference type="GO" id="GO:0051539">
    <property type="term" value="F:4 iron, 4 sulfur cluster binding"/>
    <property type="evidence" value="ECO:0007669"/>
    <property type="project" value="UniProtKB-KW"/>
</dbReference>
<dbReference type="GO" id="GO:0004076">
    <property type="term" value="F:biotin synthase activity"/>
    <property type="evidence" value="ECO:0007669"/>
    <property type="project" value="UniProtKB-UniRule"/>
</dbReference>
<dbReference type="GO" id="GO:0005506">
    <property type="term" value="F:iron ion binding"/>
    <property type="evidence" value="ECO:0007669"/>
    <property type="project" value="UniProtKB-UniRule"/>
</dbReference>
<dbReference type="GO" id="GO:0009102">
    <property type="term" value="P:biotin biosynthetic process"/>
    <property type="evidence" value="ECO:0007669"/>
    <property type="project" value="UniProtKB-UniRule"/>
</dbReference>
<dbReference type="CDD" id="cd01335">
    <property type="entry name" value="Radical_SAM"/>
    <property type="match status" value="1"/>
</dbReference>
<dbReference type="FunFam" id="3.20.20.70:FF:000011">
    <property type="entry name" value="Biotin synthase"/>
    <property type="match status" value="1"/>
</dbReference>
<dbReference type="Gene3D" id="3.20.20.70">
    <property type="entry name" value="Aldolase class I"/>
    <property type="match status" value="1"/>
</dbReference>
<dbReference type="HAMAP" id="MF_01694">
    <property type="entry name" value="BioB"/>
    <property type="match status" value="1"/>
</dbReference>
<dbReference type="InterPro" id="IPR013785">
    <property type="entry name" value="Aldolase_TIM"/>
</dbReference>
<dbReference type="InterPro" id="IPR010722">
    <property type="entry name" value="BATS_dom"/>
</dbReference>
<dbReference type="InterPro" id="IPR002684">
    <property type="entry name" value="Biotin_synth/BioAB"/>
</dbReference>
<dbReference type="InterPro" id="IPR024177">
    <property type="entry name" value="Biotin_synthase"/>
</dbReference>
<dbReference type="InterPro" id="IPR006638">
    <property type="entry name" value="Elp3/MiaA/NifB-like_rSAM"/>
</dbReference>
<dbReference type="InterPro" id="IPR007197">
    <property type="entry name" value="rSAM"/>
</dbReference>
<dbReference type="NCBIfam" id="TIGR00433">
    <property type="entry name" value="bioB"/>
    <property type="match status" value="1"/>
</dbReference>
<dbReference type="PANTHER" id="PTHR22976">
    <property type="entry name" value="BIOTIN SYNTHASE"/>
    <property type="match status" value="1"/>
</dbReference>
<dbReference type="PANTHER" id="PTHR22976:SF2">
    <property type="entry name" value="BIOTIN SYNTHASE, MITOCHONDRIAL"/>
    <property type="match status" value="1"/>
</dbReference>
<dbReference type="Pfam" id="PF06968">
    <property type="entry name" value="BATS"/>
    <property type="match status" value="1"/>
</dbReference>
<dbReference type="Pfam" id="PF04055">
    <property type="entry name" value="Radical_SAM"/>
    <property type="match status" value="1"/>
</dbReference>
<dbReference type="PIRSF" id="PIRSF001619">
    <property type="entry name" value="Biotin_synth"/>
    <property type="match status" value="1"/>
</dbReference>
<dbReference type="SFLD" id="SFLDF00272">
    <property type="entry name" value="biotin_synthase"/>
    <property type="match status" value="1"/>
</dbReference>
<dbReference type="SFLD" id="SFLDS00029">
    <property type="entry name" value="Radical_SAM"/>
    <property type="match status" value="1"/>
</dbReference>
<dbReference type="SMART" id="SM00876">
    <property type="entry name" value="BATS"/>
    <property type="match status" value="1"/>
</dbReference>
<dbReference type="SMART" id="SM00729">
    <property type="entry name" value="Elp3"/>
    <property type="match status" value="1"/>
</dbReference>
<dbReference type="SUPFAM" id="SSF102114">
    <property type="entry name" value="Radical SAM enzymes"/>
    <property type="match status" value="1"/>
</dbReference>
<dbReference type="PROSITE" id="PS51918">
    <property type="entry name" value="RADICAL_SAM"/>
    <property type="match status" value="1"/>
</dbReference>